<accession>D5UXA4</accession>
<feature type="chain" id="PRO_0000400310" description="Mycothiol acetyltransferase">
    <location>
        <begin position="1"/>
        <end position="292"/>
    </location>
</feature>
<feature type="domain" description="N-acetyltransferase 1" evidence="1">
    <location>
        <begin position="2"/>
        <end position="138"/>
    </location>
</feature>
<feature type="domain" description="N-acetyltransferase 2" evidence="1">
    <location>
        <begin position="141"/>
        <end position="292"/>
    </location>
</feature>
<feature type="binding site" evidence="1">
    <location>
        <position position="33"/>
    </location>
    <ligand>
        <name>1D-myo-inositol 2-(L-cysteinylamino)-2-deoxy-alpha-D-glucopyranoside</name>
        <dbReference type="ChEBI" id="CHEBI:58887"/>
    </ligand>
</feature>
<feature type="binding site" evidence="1">
    <location>
        <begin position="68"/>
        <end position="70"/>
    </location>
    <ligand>
        <name>acetyl-CoA</name>
        <dbReference type="ChEBI" id="CHEBI:57288"/>
        <label>1</label>
    </ligand>
</feature>
<feature type="binding site" evidence="1">
    <location>
        <position position="168"/>
    </location>
    <ligand>
        <name>1D-myo-inositol 2-(L-cysteinylamino)-2-deoxy-alpha-D-glucopyranoside</name>
        <dbReference type="ChEBI" id="CHEBI:58887"/>
    </ligand>
</feature>
<feature type="binding site" evidence="1">
    <location>
        <position position="215"/>
    </location>
    <ligand>
        <name>1D-myo-inositol 2-(L-cysteinylamino)-2-deoxy-alpha-D-glucopyranoside</name>
        <dbReference type="ChEBI" id="CHEBI:58887"/>
    </ligand>
</feature>
<feature type="binding site" evidence="1">
    <location>
        <position position="225"/>
    </location>
    <ligand>
        <name>1D-myo-inositol 2-(L-cysteinylamino)-2-deoxy-alpha-D-glucopyranoside</name>
        <dbReference type="ChEBI" id="CHEBI:58887"/>
    </ligand>
</feature>
<feature type="binding site" evidence="1">
    <location>
        <begin position="229"/>
        <end position="231"/>
    </location>
    <ligand>
        <name>acetyl-CoA</name>
        <dbReference type="ChEBI" id="CHEBI:57288"/>
        <label>2</label>
    </ligand>
</feature>
<feature type="binding site" evidence="1">
    <location>
        <begin position="236"/>
        <end position="242"/>
    </location>
    <ligand>
        <name>acetyl-CoA</name>
        <dbReference type="ChEBI" id="CHEBI:57288"/>
        <label>2</label>
    </ligand>
</feature>
<feature type="binding site" evidence="1">
    <location>
        <position position="263"/>
    </location>
    <ligand>
        <name>1D-myo-inositol 2-(L-cysteinylamino)-2-deoxy-alpha-D-glucopyranoside</name>
        <dbReference type="ChEBI" id="CHEBI:58887"/>
    </ligand>
</feature>
<feature type="binding site" evidence="1">
    <location>
        <begin position="268"/>
        <end position="273"/>
    </location>
    <ligand>
        <name>acetyl-CoA</name>
        <dbReference type="ChEBI" id="CHEBI:57288"/>
        <label>2</label>
    </ligand>
</feature>
<keyword id="KW-0012">Acyltransferase</keyword>
<keyword id="KW-1185">Reference proteome</keyword>
<keyword id="KW-0677">Repeat</keyword>
<keyword id="KW-0808">Transferase</keyword>
<proteinExistence type="inferred from homology"/>
<dbReference type="EC" id="2.3.1.189" evidence="1"/>
<dbReference type="EMBL" id="CP001966">
    <property type="protein sequence ID" value="ADG80123.1"/>
    <property type="molecule type" value="Genomic_DNA"/>
</dbReference>
<dbReference type="RefSeq" id="WP_013128119.1">
    <property type="nucleotide sequence ID" value="NC_014158.1"/>
</dbReference>
<dbReference type="SMR" id="D5UXA4"/>
<dbReference type="STRING" id="521096.Tpau_3544"/>
<dbReference type="KEGG" id="tpr:Tpau_3544"/>
<dbReference type="eggNOG" id="COG0456">
    <property type="taxonomic scope" value="Bacteria"/>
</dbReference>
<dbReference type="HOGENOM" id="CLU_068014_0_0_11"/>
<dbReference type="Proteomes" id="UP000001213">
    <property type="component" value="Chromosome"/>
</dbReference>
<dbReference type="GO" id="GO:0035447">
    <property type="term" value="F:mycothiol synthase activity"/>
    <property type="evidence" value="ECO:0007669"/>
    <property type="project" value="UniProtKB-UniRule"/>
</dbReference>
<dbReference type="GO" id="GO:0008999">
    <property type="term" value="F:protein-N-terminal-alanine acetyltransferase activity"/>
    <property type="evidence" value="ECO:0007669"/>
    <property type="project" value="TreeGrafter"/>
</dbReference>
<dbReference type="GO" id="GO:0010125">
    <property type="term" value="P:mycothiol biosynthetic process"/>
    <property type="evidence" value="ECO:0007669"/>
    <property type="project" value="UniProtKB-UniRule"/>
</dbReference>
<dbReference type="CDD" id="cd04301">
    <property type="entry name" value="NAT_SF"/>
    <property type="match status" value="2"/>
</dbReference>
<dbReference type="Gene3D" id="3.40.630.30">
    <property type="match status" value="1"/>
</dbReference>
<dbReference type="HAMAP" id="MF_01698">
    <property type="entry name" value="MshD"/>
    <property type="match status" value="1"/>
</dbReference>
<dbReference type="InterPro" id="IPR016181">
    <property type="entry name" value="Acyl_CoA_acyltransferase"/>
</dbReference>
<dbReference type="InterPro" id="IPR000182">
    <property type="entry name" value="GNAT_dom"/>
</dbReference>
<dbReference type="InterPro" id="IPR050276">
    <property type="entry name" value="MshD_Acetyltransferase"/>
</dbReference>
<dbReference type="InterPro" id="IPR017813">
    <property type="entry name" value="Mycothiol_AcTrfase"/>
</dbReference>
<dbReference type="NCBIfam" id="TIGR03448">
    <property type="entry name" value="mycothiol_MshD"/>
    <property type="match status" value="1"/>
</dbReference>
<dbReference type="PANTHER" id="PTHR43617">
    <property type="entry name" value="L-AMINO ACID N-ACETYLTRANSFERASE"/>
    <property type="match status" value="1"/>
</dbReference>
<dbReference type="PANTHER" id="PTHR43617:SF31">
    <property type="entry name" value="MYCOTHIOL ACETYLTRANSFERASE"/>
    <property type="match status" value="1"/>
</dbReference>
<dbReference type="Pfam" id="PF00583">
    <property type="entry name" value="Acetyltransf_1"/>
    <property type="match status" value="2"/>
</dbReference>
<dbReference type="PIRSF" id="PIRSF021524">
    <property type="entry name" value="MSH_acetyltransferase"/>
    <property type="match status" value="1"/>
</dbReference>
<dbReference type="SUPFAM" id="SSF55729">
    <property type="entry name" value="Acyl-CoA N-acyltransferases (Nat)"/>
    <property type="match status" value="1"/>
</dbReference>
<dbReference type="PROSITE" id="PS51186">
    <property type="entry name" value="GNAT"/>
    <property type="match status" value="2"/>
</dbReference>
<comment type="function">
    <text evidence="1">Catalyzes the transfer of acetyl from acetyl-CoA to desacetylmycothiol (Cys-GlcN-Ins) to form mycothiol.</text>
</comment>
<comment type="catalytic activity">
    <reaction evidence="1">
        <text>1D-myo-inositol 2-(L-cysteinylamino)-2-deoxy-alpha-D-glucopyranoside + acetyl-CoA = mycothiol + CoA + H(+)</text>
        <dbReference type="Rhea" id="RHEA:26172"/>
        <dbReference type="ChEBI" id="CHEBI:15378"/>
        <dbReference type="ChEBI" id="CHEBI:16768"/>
        <dbReference type="ChEBI" id="CHEBI:57287"/>
        <dbReference type="ChEBI" id="CHEBI:57288"/>
        <dbReference type="ChEBI" id="CHEBI:58887"/>
        <dbReference type="EC" id="2.3.1.189"/>
    </reaction>
</comment>
<comment type="subunit">
    <text evidence="1">Monomer.</text>
</comment>
<comment type="similarity">
    <text evidence="1">Belongs to the acetyltransferase family. MshD subfamily.</text>
</comment>
<name>MSHD_TSUPD</name>
<sequence length="292" mass="29798">MAEVVHGPVADPGAVLALVAEAQAADGIGPLSEQFRLGVAGPGPHVVAEGGYAGIVIPPAGGPGAVEAVVAPSHRGRGLGRELVATALDVAGAGATVWAHGDLTPARAVAARLGLTPVRTLLNLRRPLADLDPAPSAPDGVTVRTYAGPADDTALLAVNNAAFAWHPEQGGWGPEQIAERTGADWFDPAGLFLAIGSGSGSDEADGRLLGFHWTKVADPATGLGEVYVVAVAPEGQGRGLGRLLTSVGLHYLADRKLDTVELYVEGDNAAALHTYTKLGFSEHERHVAYAHS</sequence>
<organism>
    <name type="scientific">Tsukamurella paurometabola (strain ATCC 8368 / DSM 20162 / CCUG 35730 / CIP 100753 / JCM 10117 / KCTC 9821 / NBRC 16120 / NCIMB 702349 / NCTC 13040)</name>
    <name type="common">Corynebacterium paurometabolum</name>
    <dbReference type="NCBI Taxonomy" id="521096"/>
    <lineage>
        <taxon>Bacteria</taxon>
        <taxon>Bacillati</taxon>
        <taxon>Actinomycetota</taxon>
        <taxon>Actinomycetes</taxon>
        <taxon>Mycobacteriales</taxon>
        <taxon>Tsukamurellaceae</taxon>
        <taxon>Tsukamurella</taxon>
    </lineage>
</organism>
<gene>
    <name evidence="1" type="primary">mshD</name>
    <name type="ordered locus">Tpau_3544</name>
</gene>
<evidence type="ECO:0000255" key="1">
    <source>
        <dbReference type="HAMAP-Rule" id="MF_01698"/>
    </source>
</evidence>
<protein>
    <recommendedName>
        <fullName evidence="1">Mycothiol acetyltransferase</fullName>
        <shortName evidence="1">MSH acetyltransferase</shortName>
        <ecNumber evidence="1">2.3.1.189</ecNumber>
    </recommendedName>
    <alternativeName>
        <fullName evidence="1">Mycothiol synthase</fullName>
    </alternativeName>
</protein>
<reference key="1">
    <citation type="journal article" date="2011" name="Stand. Genomic Sci.">
        <title>Complete genome sequence of Tsukamurella paurometabola type strain (no. 33).</title>
        <authorList>
            <person name="Munk A.C."/>
            <person name="Lapidus A."/>
            <person name="Lucas S."/>
            <person name="Nolan M."/>
            <person name="Tice H."/>
            <person name="Cheng J.F."/>
            <person name="Del Rio T.G."/>
            <person name="Goodwin L."/>
            <person name="Pitluck S."/>
            <person name="Liolios K."/>
            <person name="Huntemann M."/>
            <person name="Ivanova N."/>
            <person name="Mavromatis K."/>
            <person name="Mikhailova N."/>
            <person name="Pati A."/>
            <person name="Chen A."/>
            <person name="Palaniappan K."/>
            <person name="Tapia R."/>
            <person name="Han C."/>
            <person name="Land M."/>
            <person name="Hauser L."/>
            <person name="Chang Y.J."/>
            <person name="Jeffries C.D."/>
            <person name="Brettin T."/>
            <person name="Yasawong M."/>
            <person name="Brambilla E.M."/>
            <person name="Rohde M."/>
            <person name="Sikorski J."/>
            <person name="Goeker M."/>
            <person name="Detter J.C."/>
            <person name="Woyke T."/>
            <person name="Bristow J."/>
            <person name="Eisen J.A."/>
            <person name="Markowitz V."/>
            <person name="Hugenholtz P."/>
            <person name="Kyrpides N.C."/>
            <person name="Klenk H.P."/>
        </authorList>
    </citation>
    <scope>NUCLEOTIDE SEQUENCE [LARGE SCALE GENOMIC DNA]</scope>
    <source>
        <strain>ATCC 8368 / DSM 20162 / CCUG 35730 / CIP 100753 / JCM 10117 / KCTC 9821 / NBRC 16120 / NCIMB 702349 / NCTC 13040</strain>
    </source>
</reference>